<name>ATG8_YEAS7</name>
<accession>A6ZKM4</accession>
<dbReference type="EMBL" id="AAFW02000011">
    <property type="protein sequence ID" value="EDN64543.1"/>
    <property type="molecule type" value="Genomic_DNA"/>
</dbReference>
<dbReference type="BMRB" id="A6ZKM4"/>
<dbReference type="SMR" id="A6ZKM4"/>
<dbReference type="HOGENOM" id="CLU_119276_0_1_1"/>
<dbReference type="Proteomes" id="UP000007060">
    <property type="component" value="Unassembled WGS sequence"/>
</dbReference>
<dbReference type="GO" id="GO:0000421">
    <property type="term" value="C:autophagosome membrane"/>
    <property type="evidence" value="ECO:0007669"/>
    <property type="project" value="UniProtKB-SubCell"/>
</dbReference>
<dbReference type="GO" id="GO:0033110">
    <property type="term" value="C:Cvt vesicle membrane"/>
    <property type="evidence" value="ECO:0007669"/>
    <property type="project" value="UniProtKB-SubCell"/>
</dbReference>
<dbReference type="GO" id="GO:0006914">
    <property type="term" value="P:autophagy"/>
    <property type="evidence" value="ECO:0007669"/>
    <property type="project" value="UniProtKB-KW"/>
</dbReference>
<dbReference type="GO" id="GO:0015031">
    <property type="term" value="P:protein transport"/>
    <property type="evidence" value="ECO:0007669"/>
    <property type="project" value="UniProtKB-KW"/>
</dbReference>
<dbReference type="CDD" id="cd16128">
    <property type="entry name" value="Ubl_ATG8"/>
    <property type="match status" value="1"/>
</dbReference>
<dbReference type="FunFam" id="3.10.20.90:FF:000010">
    <property type="entry name" value="Autophagy-related protein"/>
    <property type="match status" value="1"/>
</dbReference>
<dbReference type="Gene3D" id="3.10.20.90">
    <property type="entry name" value="Phosphatidylinositol 3-kinase Catalytic Subunit, Chain A, domain 1"/>
    <property type="match status" value="1"/>
</dbReference>
<dbReference type="InterPro" id="IPR004241">
    <property type="entry name" value="Atg8-like"/>
</dbReference>
<dbReference type="InterPro" id="IPR029071">
    <property type="entry name" value="Ubiquitin-like_domsf"/>
</dbReference>
<dbReference type="PANTHER" id="PTHR10969">
    <property type="entry name" value="MICROTUBULE-ASSOCIATED PROTEINS 1A/1B LIGHT CHAIN 3-RELATED"/>
    <property type="match status" value="1"/>
</dbReference>
<dbReference type="Pfam" id="PF02991">
    <property type="entry name" value="ATG8"/>
    <property type="match status" value="1"/>
</dbReference>
<dbReference type="SUPFAM" id="SSF54236">
    <property type="entry name" value="Ubiquitin-like"/>
    <property type="match status" value="1"/>
</dbReference>
<sequence length="117" mass="13627">MKSTFKSEYPFEKRKAESERIADRFKNRIPVICEKAEKSDIPEIDKRKYLVPADLTVGQFVYVIRKRIMLPPEKAIFIFVNDTLPPTAALMSAIYQEHKDKDGFLYVTYSGENTFGR</sequence>
<proteinExistence type="inferred from homology"/>
<feature type="chain" id="PRO_0000317904" description="Autophagy-related protein 8">
    <location>
        <begin position="1"/>
        <end position="116"/>
    </location>
</feature>
<feature type="propeptide" id="PRO_0000317905" description="Removed in mature form" evidence="1">
    <location>
        <position position="117"/>
    </location>
</feature>
<feature type="site" description="Cleavage; by ATG4" evidence="1">
    <location>
        <begin position="116"/>
        <end position="117"/>
    </location>
</feature>
<feature type="lipid moiety-binding region" description="Phosphatidylethanolamine amidated glycine" evidence="1">
    <location>
        <position position="116"/>
    </location>
</feature>
<protein>
    <recommendedName>
        <fullName>Autophagy-related protein 8</fullName>
    </recommendedName>
    <alternativeName>
        <fullName>Autophagy-related ubiquitin-like modifier ATG8</fullName>
    </alternativeName>
    <alternativeName>
        <fullName>Cytoplasm to vacuole targeting protein 5</fullName>
    </alternativeName>
</protein>
<gene>
    <name type="primary">ATG8</name>
    <name type="synonym">APG8</name>
    <name type="synonym">AUT7</name>
    <name type="synonym">CVT5</name>
    <name type="ORF">SCY_0144</name>
</gene>
<keyword id="KW-0072">Autophagy</keyword>
<keyword id="KW-0968">Cytoplasmic vesicle</keyword>
<keyword id="KW-0449">Lipoprotein</keyword>
<keyword id="KW-0472">Membrane</keyword>
<keyword id="KW-0653">Protein transport</keyword>
<keyword id="KW-0813">Transport</keyword>
<keyword id="KW-0833">Ubl conjugation pathway</keyword>
<keyword id="KW-0926">Vacuole</keyword>
<organism>
    <name type="scientific">Saccharomyces cerevisiae (strain YJM789)</name>
    <name type="common">Baker's yeast</name>
    <dbReference type="NCBI Taxonomy" id="307796"/>
    <lineage>
        <taxon>Eukaryota</taxon>
        <taxon>Fungi</taxon>
        <taxon>Dikarya</taxon>
        <taxon>Ascomycota</taxon>
        <taxon>Saccharomycotina</taxon>
        <taxon>Saccharomycetes</taxon>
        <taxon>Saccharomycetales</taxon>
        <taxon>Saccharomycetaceae</taxon>
        <taxon>Saccharomyces</taxon>
    </lineage>
</organism>
<comment type="function">
    <text evidence="1">Ubiquitin-like modifier involved in cytoplasm to vacuole transport (Cvt) vesicles and autophagosome formation. With ATG4, mediates the delivery of the vesicles and autophagosomes to the vacuole via the microtubule cytoskeleton. Required for selective autophagic degradation of the nucleus (nucleophagy) as well as for mitophagy which contributes to regulate mitochondrial quantity and quality by eliminating the mitochondria to a basal level to fulfill cellular energy requirements and preventing excess ROS production. Participates also in membrane fusion events that take place in the early secretory pathway. Also involved in endoplasmic reticulum-specific autophagic process and is essential for the survival of cells subjected to severe ER stress. The ATG8-PE conjugate mediates tethering between adjacent membranes and stimulates membrane hemifusion, leading to expansion of the autophagosomal membrane during autophagy. Moreover not only conjugation, but also subsequent ATG8-PE deconjugation is an important step required to facilitate multiple events during macroautophagy, and especially for efficient autophagosome biogenesis, the assembly of ATG9-containing tubulovesicular clusters into phagophores/autophagosomes, and for the disassembly of PAS-associated ATG components. Also plays a role in regulation of filamentous growth.</text>
</comment>
<comment type="subunit">
    <text evidence="1">Conjugation to phosphatidylethanolamine (PE) leads to homodimerization. Interacts with ATG1, ATG3, ATG4, ATG7, ATG12, ATG32, ATG34 and the C-terminal 10 residues domain of ATG19. Also interacts with the endoplasmic reticulum to Golgi v-SNARE protein BET1 and the vacuolar v-SNARE protein NYV1. Interacts with the UBX domain-containing protein SHP1. Interacts with the vacuolar membrane protein HFL1. Interact with ATG45.</text>
</comment>
<comment type="subcellular location">
    <subcellularLocation>
        <location evidence="1">Cytoplasmic vesicle</location>
        <location evidence="1">Cvt vesicle membrane</location>
        <topology evidence="1">Lipid-anchor</topology>
    </subcellularLocation>
    <subcellularLocation>
        <location evidence="1">Cytoplasmic vesicle</location>
        <location evidence="1">Autophagosome membrane</location>
        <topology evidence="1">Lipid-anchor</topology>
    </subcellularLocation>
    <subcellularLocation>
        <location evidence="1">Vacuole membrane</location>
        <topology evidence="1">Lipid-anchor</topology>
    </subcellularLocation>
    <text evidence="1">Membrane-associated through a lipid anchor. This association needs the 2 ubiquitin-like systems required for cytoplasm to vacuole transport and autophagy. ATG18 and ATG21 facilitate the recruitment of ATG8-PE to the site of autophagosome formation and protect it from premature cleavage by ATG4. Localizes to both the isolation membrane (IM) and the vacuole-isolation membrane contact site (VICS) during IM expansion. The IM is a membrane sac generated from the pre-autophagosomal structure that ultimately expands to become a mature autophagosome. Upon starvation, is also recruited to into unique membrane structures near SEC13-containing ER exit sites which lack components of the Golgi apparatus and the endosomes, and which were called a compartments for unconventional protein secretion (CUPS). Associates with mitochondria following nitrogen starvation in a respiratory carbon source.</text>
</comment>
<comment type="PTM">
    <text evidence="1">The C-terminal Arg-117 residue of ATG8 is removed by ATG4 to expose Gly-116 at the C-terminus. This Gly-116 forms then a thioester bond with the 'Cys-507' of ATG7 (E1-like activating enzyme) before being transferred to the 'Cys-234' of ATG3 (the specific E2 conjugating enzyme), in order to be finally amidated with phosphatidylethanolamine. This lipid modification anchors ATG8 to membranes and can be reversed by ATG4, releasing soluble ATG8.</text>
</comment>
<comment type="similarity">
    <text evidence="2">Belongs to the ATG8 family.</text>
</comment>
<evidence type="ECO:0000250" key="1">
    <source>
        <dbReference type="UniProtKB" id="P38182"/>
    </source>
</evidence>
<evidence type="ECO:0000305" key="2"/>
<reference key="1">
    <citation type="journal article" date="2007" name="Proc. Natl. Acad. Sci. U.S.A.">
        <title>Genome sequencing and comparative analysis of Saccharomyces cerevisiae strain YJM789.</title>
        <authorList>
            <person name="Wei W."/>
            <person name="McCusker J.H."/>
            <person name="Hyman R.W."/>
            <person name="Jones T."/>
            <person name="Ning Y."/>
            <person name="Cao Z."/>
            <person name="Gu Z."/>
            <person name="Bruno D."/>
            <person name="Miranda M."/>
            <person name="Nguyen M."/>
            <person name="Wilhelmy J."/>
            <person name="Komp C."/>
            <person name="Tamse R."/>
            <person name="Wang X."/>
            <person name="Jia P."/>
            <person name="Luedi P."/>
            <person name="Oefner P.J."/>
            <person name="David L."/>
            <person name="Dietrich F.S."/>
            <person name="Li Y."/>
            <person name="Davis R.W."/>
            <person name="Steinmetz L.M."/>
        </authorList>
    </citation>
    <scope>NUCLEOTIDE SEQUENCE [LARGE SCALE GENOMIC DNA]</scope>
    <source>
        <strain>YJM789</strain>
    </source>
</reference>